<gene>
    <name type="primary">adkA</name>
    <name type="ordered locus">APE_0981.1</name>
</gene>
<proteinExistence type="evidence at protein level"/>
<dbReference type="EC" id="2.7.4.3"/>
<dbReference type="EMBL" id="BA000002">
    <property type="protein sequence ID" value="BAA79965.2"/>
    <property type="molecule type" value="Genomic_DNA"/>
</dbReference>
<dbReference type="PIR" id="E72695">
    <property type="entry name" value="E72695"/>
</dbReference>
<dbReference type="PDB" id="6LN3">
    <property type="method" value="X-ray"/>
    <property type="resolution" value="2.00 A"/>
    <property type="chains" value="A=1-202"/>
</dbReference>
<dbReference type="PDBsum" id="6LN3"/>
<dbReference type="SMR" id="Q9YDD2"/>
<dbReference type="STRING" id="272557.APE_0981.1"/>
<dbReference type="EnsemblBacteria" id="BAA79965">
    <property type="protein sequence ID" value="BAA79965"/>
    <property type="gene ID" value="APE_0981.1"/>
</dbReference>
<dbReference type="KEGG" id="ape:APE_0981.1"/>
<dbReference type="eggNOG" id="arCOG01039">
    <property type="taxonomic scope" value="Archaea"/>
</dbReference>
<dbReference type="Proteomes" id="UP000002518">
    <property type="component" value="Chromosome"/>
</dbReference>
<dbReference type="GO" id="GO:0005737">
    <property type="term" value="C:cytoplasm"/>
    <property type="evidence" value="ECO:0007669"/>
    <property type="project" value="UniProtKB-SubCell"/>
</dbReference>
<dbReference type="GO" id="GO:0004017">
    <property type="term" value="F:adenylate kinase activity"/>
    <property type="evidence" value="ECO:0007669"/>
    <property type="project" value="UniProtKB-UniRule"/>
</dbReference>
<dbReference type="GO" id="GO:0005524">
    <property type="term" value="F:ATP binding"/>
    <property type="evidence" value="ECO:0007669"/>
    <property type="project" value="UniProtKB-UniRule"/>
</dbReference>
<dbReference type="GO" id="GO:0016887">
    <property type="term" value="F:ATP hydrolysis activity"/>
    <property type="evidence" value="ECO:0007669"/>
    <property type="project" value="InterPro"/>
</dbReference>
<dbReference type="Gene3D" id="3.40.50.300">
    <property type="entry name" value="P-loop containing nucleotide triphosphate hydrolases"/>
    <property type="match status" value="1"/>
</dbReference>
<dbReference type="HAMAP" id="MF_00234">
    <property type="entry name" value="Adenylate_kinase_AdkA"/>
    <property type="match status" value="1"/>
</dbReference>
<dbReference type="InterPro" id="IPR003593">
    <property type="entry name" value="AAA+_ATPase"/>
</dbReference>
<dbReference type="InterPro" id="IPR023477">
    <property type="entry name" value="Adenylate_kinase_AdkA"/>
</dbReference>
<dbReference type="InterPro" id="IPR027417">
    <property type="entry name" value="P-loop_NTPase"/>
</dbReference>
<dbReference type="NCBIfam" id="NF003122">
    <property type="entry name" value="PRK04040.1"/>
    <property type="match status" value="1"/>
</dbReference>
<dbReference type="Pfam" id="PF13207">
    <property type="entry name" value="AAA_17"/>
    <property type="match status" value="1"/>
</dbReference>
<dbReference type="SMART" id="SM00382">
    <property type="entry name" value="AAA"/>
    <property type="match status" value="1"/>
</dbReference>
<dbReference type="SUPFAM" id="SSF52540">
    <property type="entry name" value="P-loop containing nucleoside triphosphate hydrolases"/>
    <property type="match status" value="1"/>
</dbReference>
<reference key="1">
    <citation type="journal article" date="1999" name="DNA Res.">
        <title>Complete genome sequence of an aerobic hyper-thermophilic crenarchaeon, Aeropyrum pernix K1.</title>
        <authorList>
            <person name="Kawarabayasi Y."/>
            <person name="Hino Y."/>
            <person name="Horikawa H."/>
            <person name="Yamazaki S."/>
            <person name="Haikawa Y."/>
            <person name="Jin-no K."/>
            <person name="Takahashi M."/>
            <person name="Sekine M."/>
            <person name="Baba S."/>
            <person name="Ankai A."/>
            <person name="Kosugi H."/>
            <person name="Hosoyama A."/>
            <person name="Fukui S."/>
            <person name="Nagai Y."/>
            <person name="Nishijima K."/>
            <person name="Nakazawa H."/>
            <person name="Takamiya M."/>
            <person name="Masuda S."/>
            <person name="Funahashi T."/>
            <person name="Tanaka T."/>
            <person name="Kudoh Y."/>
            <person name="Yamazaki J."/>
            <person name="Kushida N."/>
            <person name="Oguchi A."/>
            <person name="Aoki K."/>
            <person name="Kubota K."/>
            <person name="Nakamura Y."/>
            <person name="Nomura N."/>
            <person name="Sako Y."/>
            <person name="Kikuchi H."/>
        </authorList>
    </citation>
    <scope>NUCLEOTIDE SEQUENCE [LARGE SCALE GENOMIC DNA]</scope>
    <source>
        <strain>ATCC 700893 / DSM 11879 / JCM 9820 / NBRC 100138 / K1</strain>
    </source>
</reference>
<sequence>MRHPFKVVVVTGVPGVGKTTVIKELQGLAEKEGVKLHIVNFGSFMLDTAVKLGLVEDRDKIRTLPLRRQLELQREAAKRIVAEASKALGGDGVLIIDTHALVKTVAGYWPGLPKHVLDELKPDMIAVVEASPEEVAARQARDTTRYRVDIGGVEGVKRLMENARAASIASAIQYASTVAIVENREGEAAKAAEELLRLIKNL</sequence>
<name>KADA_AERPE</name>
<protein>
    <recommendedName>
        <fullName>Adenylate kinase</fullName>
        <shortName>AK</shortName>
        <ecNumber>2.7.4.3</ecNumber>
    </recommendedName>
    <alternativeName>
        <fullName>ATP-AMP transphosphorylase</fullName>
    </alternativeName>
</protein>
<accession>Q9YDD2</accession>
<keyword id="KW-0002">3D-structure</keyword>
<keyword id="KW-0067">ATP-binding</keyword>
<keyword id="KW-0963">Cytoplasm</keyword>
<keyword id="KW-0418">Kinase</keyword>
<keyword id="KW-0547">Nucleotide-binding</keyword>
<keyword id="KW-1185">Reference proteome</keyword>
<keyword id="KW-0808">Transferase</keyword>
<organism>
    <name type="scientific">Aeropyrum pernix (strain ATCC 700893 / DSM 11879 / JCM 9820 / NBRC 100138 / K1)</name>
    <dbReference type="NCBI Taxonomy" id="272557"/>
    <lineage>
        <taxon>Archaea</taxon>
        <taxon>Thermoproteota</taxon>
        <taxon>Thermoprotei</taxon>
        <taxon>Desulfurococcales</taxon>
        <taxon>Desulfurococcaceae</taxon>
        <taxon>Aeropyrum</taxon>
    </lineage>
</organism>
<evidence type="ECO:0000250" key="1"/>
<evidence type="ECO:0000305" key="2"/>
<evidence type="ECO:0007829" key="3">
    <source>
        <dbReference type="PDB" id="6LN3"/>
    </source>
</evidence>
<comment type="catalytic activity">
    <reaction>
        <text>AMP + ATP = 2 ADP</text>
        <dbReference type="Rhea" id="RHEA:12973"/>
        <dbReference type="ChEBI" id="CHEBI:30616"/>
        <dbReference type="ChEBI" id="CHEBI:456215"/>
        <dbReference type="ChEBI" id="CHEBI:456216"/>
        <dbReference type="EC" id="2.7.4.3"/>
    </reaction>
</comment>
<comment type="subcellular location">
    <subcellularLocation>
        <location evidence="1">Cytoplasm</location>
    </subcellularLocation>
</comment>
<comment type="similarity">
    <text evidence="2">Belongs to the archaeal adenylate kinase family.</text>
</comment>
<feature type="chain" id="PRO_0000131812" description="Adenylate kinase">
    <location>
        <begin position="1"/>
        <end position="202"/>
    </location>
</feature>
<feature type="binding site" evidence="1">
    <location>
        <begin position="12"/>
        <end position="20"/>
    </location>
    <ligand>
        <name>ATP</name>
        <dbReference type="ChEBI" id="CHEBI:30616"/>
    </ligand>
</feature>
<feature type="strand" evidence="3">
    <location>
        <begin position="4"/>
        <end position="11"/>
    </location>
</feature>
<feature type="helix" evidence="3">
    <location>
        <begin position="18"/>
        <end position="31"/>
    </location>
</feature>
<feature type="strand" evidence="3">
    <location>
        <begin position="35"/>
        <end position="40"/>
    </location>
</feature>
<feature type="helix" evidence="3">
    <location>
        <begin position="41"/>
        <end position="51"/>
    </location>
</feature>
<feature type="helix" evidence="3">
    <location>
        <begin position="58"/>
        <end position="63"/>
    </location>
</feature>
<feature type="helix" evidence="3">
    <location>
        <begin position="66"/>
        <end position="87"/>
    </location>
</feature>
<feature type="strand" evidence="3">
    <location>
        <begin position="92"/>
        <end position="97"/>
    </location>
</feature>
<feature type="strand" evidence="3">
    <location>
        <begin position="100"/>
        <end position="104"/>
    </location>
</feature>
<feature type="strand" evidence="3">
    <location>
        <begin position="107"/>
        <end position="112"/>
    </location>
</feature>
<feature type="helix" evidence="3">
    <location>
        <begin position="114"/>
        <end position="120"/>
    </location>
</feature>
<feature type="strand" evidence="3">
    <location>
        <begin position="123"/>
        <end position="129"/>
    </location>
</feature>
<feature type="helix" evidence="3">
    <location>
        <begin position="132"/>
        <end position="141"/>
    </location>
</feature>
<feature type="helix" evidence="3">
    <location>
        <begin position="148"/>
        <end position="150"/>
    </location>
</feature>
<feature type="helix" evidence="3">
    <location>
        <begin position="152"/>
        <end position="171"/>
    </location>
</feature>
<feature type="turn" evidence="3">
    <location>
        <begin position="172"/>
        <end position="175"/>
    </location>
</feature>
<feature type="strand" evidence="3">
    <location>
        <begin position="177"/>
        <end position="182"/>
    </location>
</feature>
<feature type="helix" evidence="3">
    <location>
        <begin position="188"/>
        <end position="199"/>
    </location>
</feature>